<reference key="1">
    <citation type="journal article" date="2008" name="J. Plant Physiol.">
        <title>Alternative splicing of the rice OsMET1 genes encoding maintenance DNA methyltransferase.</title>
        <authorList>
            <person name="Yamauchi T."/>
            <person name="Moritoh S."/>
            <person name="Johzuka-Hisatomi Y."/>
            <person name="Ono A."/>
            <person name="Terada R."/>
            <person name="Nakamura I."/>
            <person name="Iida S."/>
        </authorList>
    </citation>
    <scope>NUCLEOTIDE SEQUENCE [GENOMIC DNA]</scope>
    <scope>TISSUE SPECIFICITY</scope>
    <scope>ALTERNATIVE SPLICING</scope>
    <source>
        <strain>cv. Nipponbare</strain>
    </source>
</reference>
<reference key="2">
    <citation type="journal article" date="2005" name="Nature">
        <title>The map-based sequence of the rice genome.</title>
        <authorList>
            <consortium name="International rice genome sequencing project (IRGSP)"/>
        </authorList>
    </citation>
    <scope>NUCLEOTIDE SEQUENCE [LARGE SCALE GENOMIC DNA]</scope>
    <source>
        <strain>cv. Nipponbare</strain>
    </source>
</reference>
<reference key="3">
    <citation type="journal article" date="2008" name="Nucleic Acids Res.">
        <title>The rice annotation project database (RAP-DB): 2008 update.</title>
        <authorList>
            <consortium name="The rice annotation project (RAP)"/>
        </authorList>
    </citation>
    <scope>GENOME REANNOTATION</scope>
    <source>
        <strain>cv. Nipponbare</strain>
    </source>
</reference>
<reference key="4">
    <citation type="journal article" date="2013" name="Rice">
        <title>Improvement of the Oryza sativa Nipponbare reference genome using next generation sequence and optical map data.</title>
        <authorList>
            <person name="Kawahara Y."/>
            <person name="de la Bastide M."/>
            <person name="Hamilton J.P."/>
            <person name="Kanamori H."/>
            <person name="McCombie W.R."/>
            <person name="Ouyang S."/>
            <person name="Schwartz D.C."/>
            <person name="Tanaka T."/>
            <person name="Wu J."/>
            <person name="Zhou S."/>
            <person name="Childs K.L."/>
            <person name="Davidson R.M."/>
            <person name="Lin H."/>
            <person name="Quesada-Ocampo L."/>
            <person name="Vaillancourt B."/>
            <person name="Sakai H."/>
            <person name="Lee S.S."/>
            <person name="Kim J."/>
            <person name="Numa H."/>
            <person name="Itoh T."/>
            <person name="Buell C.R."/>
            <person name="Matsumoto T."/>
        </authorList>
    </citation>
    <scope>GENOME REANNOTATION</scope>
    <source>
        <strain>cv. Nipponbare</strain>
    </source>
</reference>
<reference key="5">
    <citation type="journal article" date="2003" name="Science">
        <title>Collection, mapping, and annotation of over 28,000 cDNA clones from japonica rice.</title>
        <authorList>
            <consortium name="The rice full-length cDNA consortium"/>
        </authorList>
    </citation>
    <scope>NUCLEOTIDE SEQUENCE [LARGE SCALE MRNA] OF 1085-1529</scope>
    <source>
        <strain>cv. Nipponbare</strain>
    </source>
</reference>
<reference key="6">
    <citation type="journal article" date="2004" name="Planta">
        <title>Characterization of two rice DNA methyltransferase genes and RNAi-mediated reactivation of a silenced transgene in rice callus.</title>
        <authorList>
            <person name="Teerawanichpan P."/>
            <person name="Chandrasekharan M.B."/>
            <person name="Jiang Y."/>
            <person name="Narangajavana J."/>
            <person name="Hall T.C."/>
        </authorList>
    </citation>
    <scope>IDENTIFICATION</scope>
    <scope>TISSUE SPECIFICITY</scope>
</reference>
<reference key="7">
    <citation type="journal article" date="2009" name="FEBS J.">
        <title>Rice cytosine DNA methyltransferases - gene expression profiling during reproductive development and abiotic stress.</title>
        <authorList>
            <person name="Sharma R."/>
            <person name="Mohan Singh R.K."/>
            <person name="Malik G."/>
            <person name="Deveshwar P."/>
            <person name="Tyagi A.K."/>
            <person name="Kapoor S."/>
            <person name="Kapoor M."/>
        </authorList>
    </citation>
    <scope>INDUCTION</scope>
</reference>
<reference key="8">
    <citation type="journal article" date="2014" name="Plant Mol. Biol.">
        <title>The MET1b gene encoding a maintenance DNA methyltransferase is indispensable for normal development in rice.</title>
        <authorList>
            <person name="Yamauchi T."/>
            <person name="Johzuka-Hisatomi Y."/>
            <person name="Terada R."/>
            <person name="Nakamura I."/>
            <person name="Iida S."/>
        </authorList>
    </citation>
    <scope>FUNCTION</scope>
    <scope>TISSUE SPECIFICITY</scope>
    <scope>DISRUPTION PHENOTYPE</scope>
</reference>
<reference key="9">
    <citation type="journal article" date="2014" name="Proc. Natl. Acad. Sci. U.S.A.">
        <title>Mutation of a major CG methylase in rice causes genome-wide hypomethylation, dysregulated genome expression, and seedling lethality.</title>
        <authorList>
            <person name="Hu L."/>
            <person name="Li N."/>
            <person name="Xu C."/>
            <person name="Zhong S."/>
            <person name="Lin X."/>
            <person name="Yang J."/>
            <person name="Zhou T."/>
            <person name="Yuliang A."/>
            <person name="Wu Y."/>
            <person name="Chen Y.R."/>
            <person name="Cao X."/>
            <person name="Zemach A."/>
            <person name="Rustgi S."/>
            <person name="von Wettstein D."/>
            <person name="Liu B."/>
        </authorList>
    </citation>
    <scope>FUNCTION</scope>
    <scope>DISRUPTION PHENOTYPE</scope>
</reference>
<protein>
    <recommendedName>
        <fullName evidence="12">DNA (cytosine-5)-methyltransferase 1B</fullName>
        <shortName evidence="12">OsMET1b</shortName>
        <ecNumber evidence="3">2.1.1.37</ecNumber>
    </recommendedName>
    <alternativeName>
        <fullName evidence="11">DNA methyltransferase 1-2</fullName>
        <shortName evidence="11">OsMET1-2</shortName>
    </alternativeName>
</protein>
<organism>
    <name type="scientific">Oryza sativa subsp. japonica</name>
    <name type="common">Rice</name>
    <dbReference type="NCBI Taxonomy" id="39947"/>
    <lineage>
        <taxon>Eukaryota</taxon>
        <taxon>Viridiplantae</taxon>
        <taxon>Streptophyta</taxon>
        <taxon>Embryophyta</taxon>
        <taxon>Tracheophyta</taxon>
        <taxon>Spermatophyta</taxon>
        <taxon>Magnoliopsida</taxon>
        <taxon>Liliopsida</taxon>
        <taxon>Poales</taxon>
        <taxon>Poaceae</taxon>
        <taxon>BOP clade</taxon>
        <taxon>Oryzoideae</taxon>
        <taxon>Oryzeae</taxon>
        <taxon>Oryzinae</taxon>
        <taxon>Oryza</taxon>
        <taxon>Oryza sativa</taxon>
    </lineage>
</organism>
<proteinExistence type="evidence at transcript level"/>
<gene>
    <name type="primary">MET1B</name>
    <name evidence="11" type="synonym">MET1-2</name>
    <name evidence="15" type="ordered locus">Os07g0182900</name>
    <name evidence="13" type="ordered locus">LOC_Os07g08500</name>
    <name evidence="14" type="ORF">OJ1506_G02.17</name>
</gene>
<feature type="chain" id="PRO_0000381940" description="DNA (cytosine-5)-methyltransferase 1B">
    <location>
        <begin position="1"/>
        <end position="1529"/>
    </location>
</feature>
<feature type="domain" description="BAH 1" evidence="2">
    <location>
        <begin position="741"/>
        <end position="873"/>
    </location>
</feature>
<feature type="domain" description="BAH 2" evidence="2">
    <location>
        <begin position="910"/>
        <end position="1049"/>
    </location>
</feature>
<feature type="domain" description="SAM-dependent MTase C5-type" evidence="3">
    <location>
        <begin position="1093"/>
        <end position="1527"/>
    </location>
</feature>
<feature type="region of interest" description="Disordered" evidence="5">
    <location>
        <begin position="1"/>
        <end position="56"/>
    </location>
</feature>
<feature type="region of interest" description="Disordered" evidence="5">
    <location>
        <begin position="674"/>
        <end position="706"/>
    </location>
</feature>
<feature type="compositionally biased region" description="Basic and acidic residues" evidence="5">
    <location>
        <begin position="21"/>
        <end position="35"/>
    </location>
</feature>
<feature type="compositionally biased region" description="Acidic residues" evidence="5">
    <location>
        <begin position="674"/>
        <end position="694"/>
    </location>
</feature>
<feature type="compositionally biased region" description="Polar residues" evidence="5">
    <location>
        <begin position="697"/>
        <end position="706"/>
    </location>
</feature>
<feature type="active site" evidence="3 4">
    <location>
        <position position="1198"/>
    </location>
</feature>
<feature type="splice variant" id="VSP_037851" description="In isoform 3." evidence="13">
    <location>
        <begin position="1"/>
        <end position="43"/>
    </location>
</feature>
<feature type="splice variant" id="VSP_037852" description="In isoform 2." evidence="13">
    <location>
        <begin position="1"/>
        <end position="32"/>
    </location>
</feature>
<feature type="splice variant" id="VSP_037853" description="In isoform 2." evidence="13">
    <original>LDEGPLDATKE</original>
    <variation>MLSCGVFRKEK</variation>
    <location>
        <begin position="33"/>
        <end position="43"/>
    </location>
</feature>
<feature type="sequence conflict" description="In Ref. 1; DAA01513." evidence="13" ref="1">
    <original>D</original>
    <variation>E</variation>
    <location>
        <position position="923"/>
    </location>
</feature>
<accession>B1Q3J6</accession>
<accession>A0A0P0X2V1</accession>
<accession>B1Q3J7</accession>
<accession>Q0D857</accession>
<accession>Q69W70</accession>
<accession>Q7PC77</accession>
<name>DNM1B_ORYSJ</name>
<sequence>MVKSPCSPVTTGKKRCRAKPQKKDEDTTDKGKLDEGPLDATKEMNGVGKGDSRAACKRPRRAAACSDFKEKSVRLSDKSSVVATNGNKMEEEEMDAVKLTKLGPEVQRPCRKLIDFILHDADGKLQPFEMSEIDDFFITALIMPMDDDLEKDRQKGVRCEGFGRIEDWAISGYDEGTAVVWVSTEVADYECVKPAGNYKSYYDHFYEKAQVCVEVYRKLARSVGGNPNLGLEELLASVVRSINAIKGYSGTLSKDFVISNGEFVYNQLIGLDETANTDDEKFATLPVLLALRDGCKSRVEVSKLQPNISNGSLKINDAECKEVSEDDDEKLARLLQQEEEWKMMKQRGKRGTTSQKNVYIKISEAEIANDYPLPAYYKPSSQEMDEYIFDSEDSFYSDVPVRILNNWALYNADSRLIPLELIPMKAGAENDIVVFGSGFMREDDGSCCSTAESAKLSSSSSSNHQDAGVSIYLSPIKEWVIEFGGSMICITIRTDVAWYKLRQPTKQYAPWCEPVLKTARLSVSIITLLKEQSRASKLSFADVIKKVAEFDKGSPAFVSSNVALVERYIVVHGQIILQQFSDFPDETIRRSAFATGLLMKMEQRRHTKLVMKKKVQVMRGENLNPSATMGPASRRKVMRATTTRLINRIWSDYYTHHFPEDSKDADVNEAKEIDDELEENEDEDAEEEAQIEEENVSKTPPSTRSRKLVSQTCKEIRWEGEAIGKTPSGEALYKCAYVRELRINLGRTVALEDDSGELVMCFVEYMFQKLNGAKMVHGRLLQKGSETVLGNAANERDLFLTNECLEFELEDIKELMSVNLQSLPWGHKYRKENAEADRIERAKAEDRKKKGLPMEYLCKSLYWPEKGAFFSLPHDKLGLGNGFCSSCQQKEPDCDELQILSKNSFIYRNITYNVNDYLYIRPDFFSQEEDRATFKGGRNVGLKPYVVCHLLDVHEPAGSRKIHPASTKISVRRFYRPDDISSAKAYVSDIREVYYSENIVKVPVDMIEGKCEVKKKIDISNSDVPVMVEHEFFCEHFYDPATGALKQLPPNVKLMSVQQKATGALKKNKGKQICESDQVDSDKCTKVSKENRLATLDIFAGCGGLSEGLQQAGVSFTKWAIEYEEPAGEAFTKNHPEAAVFVDNCNVILKAIMDKCGDADDCISTSEAAEQAAKFSQDNIMNLPVPGEVEFINGGPPCQGFSGMNRFNQSPWSKVQCEMILAFLSFAEYFRPRFFLLENVRNFVSFNKGQTFRLTVASLLEMGYQVRFGILEAGTFGVAQSRKRAFIWAAAPGETLPDWPEPMHVFASPELKINLPDGKYYAAAKSTAGGAPFRAITVRDTIGDLPKVENGASKLLLEYGGEPISWFQKKIRGNTIALNDHISKEMNELNLIRCQRIPKRPGCDWHDLPDEKVKLSSGQLVDLIPWCLPNTAKRHNQWKGLYGRLDWEGNFPTSVTDPQPMGKVGMCFHPDQDRIITVRECARSQGFPDNYQFAGNIQSKHRQIGNAVPPPLAFALGRKLKEAVDAKRQ</sequence>
<evidence type="ECO:0000250" key="1"/>
<evidence type="ECO:0000255" key="2">
    <source>
        <dbReference type="PROSITE-ProRule" id="PRU00370"/>
    </source>
</evidence>
<evidence type="ECO:0000255" key="3">
    <source>
        <dbReference type="PROSITE-ProRule" id="PRU01016"/>
    </source>
</evidence>
<evidence type="ECO:0000255" key="4">
    <source>
        <dbReference type="PROSITE-ProRule" id="PRU10018"/>
    </source>
</evidence>
<evidence type="ECO:0000256" key="5">
    <source>
        <dbReference type="SAM" id="MobiDB-lite"/>
    </source>
</evidence>
<evidence type="ECO:0000269" key="6">
    <source>
    </source>
</evidence>
<evidence type="ECO:0000269" key="7">
    <source>
    </source>
</evidence>
<evidence type="ECO:0000269" key="8">
    <source>
    </source>
</evidence>
<evidence type="ECO:0000269" key="9">
    <source>
    </source>
</evidence>
<evidence type="ECO:0000269" key="10">
    <source>
    </source>
</evidence>
<evidence type="ECO:0000303" key="11">
    <source>
    </source>
</evidence>
<evidence type="ECO:0000303" key="12">
    <source>
    </source>
</evidence>
<evidence type="ECO:0000305" key="13"/>
<evidence type="ECO:0000312" key="14">
    <source>
        <dbReference type="EMBL" id="BAD30340.1"/>
    </source>
</evidence>
<evidence type="ECO:0000312" key="15">
    <source>
        <dbReference type="EMBL" id="BAT00335.1"/>
    </source>
</evidence>
<comment type="function">
    <text evidence="9 10">Major CG methylase that methylates chromatin CpG residues and maintains DNA methylation (PubMed:24535433, PubMed:25002488). Plays a major role in genomic imprinting, regulation of embryogenesis and seed viability (PubMed:24535433, PubMed:25002488). Maintains DNA methylation at the FIE1 gene locus in the embryo (PubMed:24535433).</text>
</comment>
<comment type="catalytic activity">
    <reaction evidence="4">
        <text>a 2'-deoxycytidine in DNA + S-adenosyl-L-methionine = a 5-methyl-2'-deoxycytidine in DNA + S-adenosyl-L-homocysteine + H(+)</text>
        <dbReference type="Rhea" id="RHEA:13681"/>
        <dbReference type="Rhea" id="RHEA-COMP:11369"/>
        <dbReference type="Rhea" id="RHEA-COMP:11370"/>
        <dbReference type="ChEBI" id="CHEBI:15378"/>
        <dbReference type="ChEBI" id="CHEBI:57856"/>
        <dbReference type="ChEBI" id="CHEBI:59789"/>
        <dbReference type="ChEBI" id="CHEBI:85452"/>
        <dbReference type="ChEBI" id="CHEBI:85454"/>
        <dbReference type="EC" id="2.1.1.37"/>
    </reaction>
</comment>
<comment type="subcellular location">
    <subcellularLocation>
        <location evidence="1">Nucleus</location>
    </subcellularLocation>
</comment>
<comment type="alternative products">
    <event type="alternative splicing"/>
    <isoform>
        <id>B1Q3J6-1</id>
        <name>1</name>
        <sequence type="displayed"/>
    </isoform>
    <isoform>
        <id>B1Q3J6-2</id>
        <name>2</name>
        <sequence type="described" ref="VSP_037852 VSP_037853"/>
    </isoform>
    <isoform>
        <id>B1Q3J6-3</id>
        <name>3</name>
        <sequence type="described" ref="VSP_037851"/>
    </isoform>
</comment>
<comment type="tissue specificity">
    <text evidence="6 7 9">Expressed in roots and inflorescences (PubMed:14513380). Expressed in roots, panicles, anthers, pistils, endosperm and imbibed embryos (PubMed:18281124). Expressed in tissues containing actively replicating and dividing cells, such as shoot and root meristems (PubMed:24535433).</text>
</comment>
<comment type="induction">
    <text evidence="8">Induced by salt stress, cold stress and drought stress.</text>
</comment>
<comment type="disruption phenotype">
    <text evidence="9 10">Non-viable and shrunk seeds, and embryonic lethality when homozygous.</text>
</comment>
<comment type="similarity">
    <text evidence="3">Belongs to the class I-like SAM-binding methyltransferase superfamily. C5-methyltransferase family.</text>
</comment>
<comment type="sequence caution" evidence="13">
    <conflict type="frameshift">
        <sequence resource="EMBL" id="AK111461"/>
    </conflict>
</comment>
<comment type="sequence caution" evidence="13">
    <conflict type="erroneous gene model prediction">
        <sequence resource="EMBL-CDS" id="BAD30340"/>
    </conflict>
</comment>
<comment type="sequence caution" evidence="13">
    <conflict type="erroneous gene model prediction">
        <sequence resource="EMBL-CDS" id="BAF20966"/>
    </conflict>
</comment>
<keyword id="KW-0025">Alternative splicing</keyword>
<keyword id="KW-0238">DNA-binding</keyword>
<keyword id="KW-0489">Methyltransferase</keyword>
<keyword id="KW-0539">Nucleus</keyword>
<keyword id="KW-1185">Reference proteome</keyword>
<keyword id="KW-0677">Repeat</keyword>
<keyword id="KW-0949">S-adenosyl-L-methionine</keyword>
<keyword id="KW-0808">Transferase</keyword>
<dbReference type="EC" id="2.1.1.37" evidence="3"/>
<dbReference type="EMBL" id="AB362511">
    <property type="protein sequence ID" value="BAG15929.1"/>
    <property type="molecule type" value="Genomic_DNA"/>
</dbReference>
<dbReference type="EMBL" id="AB362511">
    <property type="protein sequence ID" value="BAG15930.1"/>
    <property type="molecule type" value="Genomic_DNA"/>
</dbReference>
<dbReference type="EMBL" id="AP003835">
    <property type="protein sequence ID" value="BAD30340.1"/>
    <property type="status" value="ALT_SEQ"/>
    <property type="molecule type" value="Genomic_DNA"/>
</dbReference>
<dbReference type="EMBL" id="AP008213">
    <property type="protein sequence ID" value="BAF20966.1"/>
    <property type="status" value="ALT_SEQ"/>
    <property type="molecule type" value="Genomic_DNA"/>
</dbReference>
<dbReference type="EMBL" id="AP014963">
    <property type="protein sequence ID" value="BAT00335.1"/>
    <property type="molecule type" value="Genomic_DNA"/>
</dbReference>
<dbReference type="EMBL" id="AP014963">
    <property type="protein sequence ID" value="BAT00336.1"/>
    <property type="molecule type" value="Genomic_DNA"/>
</dbReference>
<dbReference type="EMBL" id="AP014963">
    <property type="protein sequence ID" value="BAT00337.1"/>
    <property type="molecule type" value="Genomic_DNA"/>
</dbReference>
<dbReference type="EMBL" id="AK111461">
    <property type="status" value="NOT_ANNOTATED_CDS"/>
    <property type="molecule type" value="mRNA"/>
</dbReference>
<dbReference type="EMBL" id="BK001405">
    <property type="protein sequence ID" value="DAA01513.1"/>
    <property type="molecule type" value="Genomic_DNA"/>
</dbReference>
<dbReference type="RefSeq" id="XP_015645008.1">
    <property type="nucleotide sequence ID" value="XM_015789522.1"/>
</dbReference>
<dbReference type="RefSeq" id="XP_015645009.1">
    <property type="nucleotide sequence ID" value="XM_015789523.1"/>
</dbReference>
<dbReference type="SMR" id="B1Q3J6"/>
<dbReference type="FunCoup" id="B1Q3J6">
    <property type="interactions" value="1149"/>
</dbReference>
<dbReference type="STRING" id="39947.B1Q3J6"/>
<dbReference type="REBASE" id="7659">
    <property type="entry name" value="M.OsaDnmt1B"/>
</dbReference>
<dbReference type="PaxDb" id="39947-B1Q3J6"/>
<dbReference type="EnsemblPlants" id="Os07t0182900-02">
    <molecule id="B1Q3J6-1"/>
    <property type="protein sequence ID" value="Os07t0182900-02"/>
    <property type="gene ID" value="Os07g0182900"/>
</dbReference>
<dbReference type="EnsemblPlants" id="Os07t0182900-03">
    <molecule id="B1Q3J6-1"/>
    <property type="protein sequence ID" value="Os07t0182900-03"/>
    <property type="gene ID" value="Os07g0182900"/>
</dbReference>
<dbReference type="EnsemblPlants" id="Os07t0182900-04">
    <molecule id="B1Q3J6-1"/>
    <property type="protein sequence ID" value="Os07t0182900-04"/>
    <property type="gene ID" value="Os07g0182900"/>
</dbReference>
<dbReference type="Gramene" id="Os07t0182900-02">
    <molecule id="B1Q3J6-1"/>
    <property type="protein sequence ID" value="Os07t0182900-02"/>
    <property type="gene ID" value="Os07g0182900"/>
</dbReference>
<dbReference type="Gramene" id="Os07t0182900-03">
    <molecule id="B1Q3J6-1"/>
    <property type="protein sequence ID" value="Os07t0182900-03"/>
    <property type="gene ID" value="Os07g0182900"/>
</dbReference>
<dbReference type="Gramene" id="Os07t0182900-04">
    <molecule id="B1Q3J6-1"/>
    <property type="protein sequence ID" value="Os07t0182900-04"/>
    <property type="gene ID" value="Os07g0182900"/>
</dbReference>
<dbReference type="KEGG" id="dosa:Os07g0182900"/>
<dbReference type="eggNOG" id="ENOG502QPKK">
    <property type="taxonomic scope" value="Eukaryota"/>
</dbReference>
<dbReference type="HOGENOM" id="CLU_006958_2_3_1"/>
<dbReference type="InParanoid" id="B1Q3J6"/>
<dbReference type="OrthoDB" id="5376140at2759"/>
<dbReference type="BRENDA" id="2.1.1.37">
    <property type="organism ID" value="4460"/>
</dbReference>
<dbReference type="Proteomes" id="UP000000763">
    <property type="component" value="Chromosome 7"/>
</dbReference>
<dbReference type="Proteomes" id="UP000059680">
    <property type="component" value="Chromosome 7"/>
</dbReference>
<dbReference type="GO" id="GO:0005634">
    <property type="term" value="C:nucleus"/>
    <property type="evidence" value="ECO:0000318"/>
    <property type="project" value="GO_Central"/>
</dbReference>
<dbReference type="GO" id="GO:0003682">
    <property type="term" value="F:chromatin binding"/>
    <property type="evidence" value="ECO:0007669"/>
    <property type="project" value="InterPro"/>
</dbReference>
<dbReference type="GO" id="GO:0003886">
    <property type="term" value="F:DNA (cytosine-5-)-methyltransferase activity"/>
    <property type="evidence" value="ECO:0000318"/>
    <property type="project" value="GO_Central"/>
</dbReference>
<dbReference type="GO" id="GO:0003677">
    <property type="term" value="F:DNA binding"/>
    <property type="evidence" value="ECO:0000318"/>
    <property type="project" value="GO_Central"/>
</dbReference>
<dbReference type="GO" id="GO:0006346">
    <property type="term" value="P:DNA methylation-dependent constitutive heterochromatin formation"/>
    <property type="evidence" value="ECO:0007669"/>
    <property type="project" value="InterPro"/>
</dbReference>
<dbReference type="GO" id="GO:0009793">
    <property type="term" value="P:embryo development ending in seed dormancy"/>
    <property type="evidence" value="ECO:0000315"/>
    <property type="project" value="UniProtKB"/>
</dbReference>
<dbReference type="GO" id="GO:0071514">
    <property type="term" value="P:genomic imprinting"/>
    <property type="evidence" value="ECO:0000315"/>
    <property type="project" value="UniProtKB"/>
</dbReference>
<dbReference type="GO" id="GO:0032259">
    <property type="term" value="P:methylation"/>
    <property type="evidence" value="ECO:0007669"/>
    <property type="project" value="UniProtKB-KW"/>
</dbReference>
<dbReference type="GO" id="GO:0044027">
    <property type="term" value="P:negative regulation of gene expression via chromosomal CpG island methylation"/>
    <property type="evidence" value="ECO:0000315"/>
    <property type="project" value="UniProtKB"/>
</dbReference>
<dbReference type="CDD" id="cd04708">
    <property type="entry name" value="BAH_plantDCM_II"/>
    <property type="match status" value="1"/>
</dbReference>
<dbReference type="FunFam" id="2.30.30.490:FF:000009">
    <property type="entry name" value="DNA (cytosine-5)-methyltransferase"/>
    <property type="match status" value="1"/>
</dbReference>
<dbReference type="FunFam" id="2.30.30.490:FF:000013">
    <property type="entry name" value="DNA (cytosine-5)-methyltransferase"/>
    <property type="match status" value="1"/>
</dbReference>
<dbReference type="FunFam" id="3.40.50.150:FF:000108">
    <property type="entry name" value="DNA (cytosine-5)-methyltransferase"/>
    <property type="match status" value="1"/>
</dbReference>
<dbReference type="FunFam" id="3.40.50.150:FF:000128">
    <property type="entry name" value="DNA (cytosine-5)-methyltransferase"/>
    <property type="match status" value="1"/>
</dbReference>
<dbReference type="FunFam" id="3.90.120.10:FF:000002">
    <property type="entry name" value="DNA (cytosine-5)-methyltransferase"/>
    <property type="match status" value="1"/>
</dbReference>
<dbReference type="FunFam" id="3.90.120.10:FF:000004">
    <property type="entry name" value="DNA (cytosine-5)-methyltransferase"/>
    <property type="match status" value="1"/>
</dbReference>
<dbReference type="Gene3D" id="2.30.30.490">
    <property type="match status" value="2"/>
</dbReference>
<dbReference type="Gene3D" id="3.90.120.10">
    <property type="entry name" value="DNA Methylase, subunit A, domain 2"/>
    <property type="match status" value="2"/>
</dbReference>
<dbReference type="Gene3D" id="3.40.50.150">
    <property type="entry name" value="Vaccinia Virus protein VP39"/>
    <property type="match status" value="1"/>
</dbReference>
<dbReference type="InterPro" id="IPR001025">
    <property type="entry name" value="BAH_dom"/>
</dbReference>
<dbReference type="InterPro" id="IPR043151">
    <property type="entry name" value="BAH_sf"/>
</dbReference>
<dbReference type="InterPro" id="IPR050390">
    <property type="entry name" value="C5-Methyltransferase"/>
</dbReference>
<dbReference type="InterPro" id="IPR018117">
    <property type="entry name" value="C5_DNA_meth_AS"/>
</dbReference>
<dbReference type="InterPro" id="IPR001525">
    <property type="entry name" value="C5_MeTfrase"/>
</dbReference>
<dbReference type="InterPro" id="IPR031303">
    <property type="entry name" value="C5_meth_CS"/>
</dbReference>
<dbReference type="InterPro" id="IPR022702">
    <property type="entry name" value="Cytosine_MeTrfase1_RFD"/>
</dbReference>
<dbReference type="InterPro" id="IPR017198">
    <property type="entry name" value="DNMT1-like"/>
</dbReference>
<dbReference type="InterPro" id="IPR029063">
    <property type="entry name" value="SAM-dependent_MTases_sf"/>
</dbReference>
<dbReference type="NCBIfam" id="TIGR00675">
    <property type="entry name" value="dcm"/>
    <property type="match status" value="1"/>
</dbReference>
<dbReference type="PANTHER" id="PTHR10629">
    <property type="entry name" value="CYTOSINE-SPECIFIC METHYLTRANSFERASE"/>
    <property type="match status" value="1"/>
</dbReference>
<dbReference type="PANTHER" id="PTHR10629:SF52">
    <property type="entry name" value="DNA (CYTOSINE-5)-METHYLTRANSFERASE 1"/>
    <property type="match status" value="1"/>
</dbReference>
<dbReference type="Pfam" id="PF01426">
    <property type="entry name" value="BAH"/>
    <property type="match status" value="2"/>
</dbReference>
<dbReference type="Pfam" id="PF00145">
    <property type="entry name" value="DNA_methylase"/>
    <property type="match status" value="1"/>
</dbReference>
<dbReference type="Pfam" id="PF12047">
    <property type="entry name" value="DNMT1-RFD"/>
    <property type="match status" value="2"/>
</dbReference>
<dbReference type="PIRSF" id="PIRSF037404">
    <property type="entry name" value="DNMT1"/>
    <property type="match status" value="1"/>
</dbReference>
<dbReference type="PRINTS" id="PR00105">
    <property type="entry name" value="C5METTRFRASE"/>
</dbReference>
<dbReference type="SMART" id="SM00439">
    <property type="entry name" value="BAH"/>
    <property type="match status" value="2"/>
</dbReference>
<dbReference type="SUPFAM" id="SSF53335">
    <property type="entry name" value="S-adenosyl-L-methionine-dependent methyltransferases"/>
    <property type="match status" value="1"/>
</dbReference>
<dbReference type="PROSITE" id="PS51038">
    <property type="entry name" value="BAH"/>
    <property type="match status" value="2"/>
</dbReference>
<dbReference type="PROSITE" id="PS00094">
    <property type="entry name" value="C5_MTASE_1"/>
    <property type="match status" value="1"/>
</dbReference>
<dbReference type="PROSITE" id="PS00095">
    <property type="entry name" value="C5_MTASE_2"/>
    <property type="match status" value="1"/>
</dbReference>
<dbReference type="PROSITE" id="PS51679">
    <property type="entry name" value="SAM_MT_C5"/>
    <property type="match status" value="1"/>
</dbReference>